<accession>A6UPR4</accession>
<dbReference type="EC" id="6.3.5.-" evidence="1"/>
<dbReference type="EMBL" id="CP000742">
    <property type="protein sequence ID" value="ABR54486.1"/>
    <property type="molecule type" value="Genomic_DNA"/>
</dbReference>
<dbReference type="RefSeq" id="WP_011972389.1">
    <property type="nucleotide sequence ID" value="NC_009634.1"/>
</dbReference>
<dbReference type="SMR" id="A6UPR4"/>
<dbReference type="STRING" id="406327.Mevan_0579"/>
<dbReference type="GeneID" id="5326062"/>
<dbReference type="KEGG" id="mvn:Mevan_0579"/>
<dbReference type="eggNOG" id="arCOG01924">
    <property type="taxonomic scope" value="Archaea"/>
</dbReference>
<dbReference type="HOGENOM" id="CLU_019134_2_1_2"/>
<dbReference type="OrthoDB" id="371959at2157"/>
<dbReference type="Proteomes" id="UP000001107">
    <property type="component" value="Chromosome"/>
</dbReference>
<dbReference type="GO" id="GO:0004067">
    <property type="term" value="F:asparaginase activity"/>
    <property type="evidence" value="ECO:0007669"/>
    <property type="project" value="InterPro"/>
</dbReference>
<dbReference type="GO" id="GO:0005524">
    <property type="term" value="F:ATP binding"/>
    <property type="evidence" value="ECO:0007669"/>
    <property type="project" value="UniProtKB-KW"/>
</dbReference>
<dbReference type="GO" id="GO:0050567">
    <property type="term" value="F:glutaminyl-tRNA synthase (glutamine-hydrolyzing) activity"/>
    <property type="evidence" value="ECO:0007669"/>
    <property type="project" value="UniProtKB-UniRule"/>
</dbReference>
<dbReference type="GO" id="GO:0006520">
    <property type="term" value="P:amino acid metabolic process"/>
    <property type="evidence" value="ECO:0007669"/>
    <property type="project" value="InterPro"/>
</dbReference>
<dbReference type="GO" id="GO:0006450">
    <property type="term" value="P:regulation of translational fidelity"/>
    <property type="evidence" value="ECO:0007669"/>
    <property type="project" value="InterPro"/>
</dbReference>
<dbReference type="GO" id="GO:0006412">
    <property type="term" value="P:translation"/>
    <property type="evidence" value="ECO:0007669"/>
    <property type="project" value="UniProtKB-UniRule"/>
</dbReference>
<dbReference type="CDD" id="cd08962">
    <property type="entry name" value="GatD"/>
    <property type="match status" value="1"/>
</dbReference>
<dbReference type="FunFam" id="3.40.50.1170:FF:000001">
    <property type="entry name" value="L-asparaginase 2"/>
    <property type="match status" value="1"/>
</dbReference>
<dbReference type="Gene3D" id="2.30.30.520">
    <property type="match status" value="1"/>
</dbReference>
<dbReference type="Gene3D" id="3.40.50.40">
    <property type="match status" value="1"/>
</dbReference>
<dbReference type="Gene3D" id="3.40.50.1170">
    <property type="entry name" value="L-asparaginase, N-terminal domain"/>
    <property type="match status" value="1"/>
</dbReference>
<dbReference type="HAMAP" id="MF_00586">
    <property type="entry name" value="GatD"/>
    <property type="match status" value="1"/>
</dbReference>
<dbReference type="InterPro" id="IPR006033">
    <property type="entry name" value="AsnA_fam"/>
</dbReference>
<dbReference type="InterPro" id="IPR036152">
    <property type="entry name" value="Asp/glu_Ase-like_sf"/>
</dbReference>
<dbReference type="InterPro" id="IPR006034">
    <property type="entry name" value="Asparaginase/glutaminase-like"/>
</dbReference>
<dbReference type="InterPro" id="IPR020827">
    <property type="entry name" value="Asparaginase/glutaminase_AS1"/>
</dbReference>
<dbReference type="InterPro" id="IPR027475">
    <property type="entry name" value="Asparaginase/glutaminase_AS2"/>
</dbReference>
<dbReference type="InterPro" id="IPR040919">
    <property type="entry name" value="Asparaginase_C"/>
</dbReference>
<dbReference type="InterPro" id="IPR011878">
    <property type="entry name" value="GatD"/>
</dbReference>
<dbReference type="InterPro" id="IPR040918">
    <property type="entry name" value="GatD_N"/>
</dbReference>
<dbReference type="InterPro" id="IPR037222">
    <property type="entry name" value="GatD_N_sf"/>
</dbReference>
<dbReference type="InterPro" id="IPR027473">
    <property type="entry name" value="L-asparaginase_C"/>
</dbReference>
<dbReference type="InterPro" id="IPR027474">
    <property type="entry name" value="L-asparaginase_N"/>
</dbReference>
<dbReference type="InterPro" id="IPR037152">
    <property type="entry name" value="L-asparaginase_N_sf"/>
</dbReference>
<dbReference type="NCBIfam" id="TIGR00519">
    <property type="entry name" value="asnASE_I"/>
    <property type="match status" value="1"/>
</dbReference>
<dbReference type="NCBIfam" id="TIGR02153">
    <property type="entry name" value="gatD_arch"/>
    <property type="match status" value="1"/>
</dbReference>
<dbReference type="NCBIfam" id="NF003217">
    <property type="entry name" value="PRK04183.1"/>
    <property type="match status" value="1"/>
</dbReference>
<dbReference type="PANTHER" id="PTHR11707:SF28">
    <property type="entry name" value="60 KDA LYSOPHOSPHOLIPASE"/>
    <property type="match status" value="1"/>
</dbReference>
<dbReference type="PANTHER" id="PTHR11707">
    <property type="entry name" value="L-ASPARAGINASE"/>
    <property type="match status" value="1"/>
</dbReference>
<dbReference type="Pfam" id="PF00710">
    <property type="entry name" value="Asparaginase"/>
    <property type="match status" value="1"/>
</dbReference>
<dbReference type="Pfam" id="PF17763">
    <property type="entry name" value="Asparaginase_C"/>
    <property type="match status" value="1"/>
</dbReference>
<dbReference type="Pfam" id="PF18195">
    <property type="entry name" value="GatD_N"/>
    <property type="match status" value="1"/>
</dbReference>
<dbReference type="PIRSF" id="PIRSF500175">
    <property type="entry name" value="Glu_ADT_D"/>
    <property type="match status" value="1"/>
</dbReference>
<dbReference type="PIRSF" id="PIRSF001220">
    <property type="entry name" value="L-ASNase_gatD"/>
    <property type="match status" value="1"/>
</dbReference>
<dbReference type="PRINTS" id="PR00139">
    <property type="entry name" value="ASNGLNASE"/>
</dbReference>
<dbReference type="SMART" id="SM00870">
    <property type="entry name" value="Asparaginase"/>
    <property type="match status" value="1"/>
</dbReference>
<dbReference type="SUPFAM" id="SSF141300">
    <property type="entry name" value="GatD N-terminal domain-like"/>
    <property type="match status" value="1"/>
</dbReference>
<dbReference type="SUPFAM" id="SSF53774">
    <property type="entry name" value="Glutaminase/Asparaginase"/>
    <property type="match status" value="1"/>
</dbReference>
<dbReference type="PROSITE" id="PS00144">
    <property type="entry name" value="ASN_GLN_ASE_1"/>
    <property type="match status" value="1"/>
</dbReference>
<dbReference type="PROSITE" id="PS00917">
    <property type="entry name" value="ASN_GLN_ASE_2"/>
    <property type="match status" value="1"/>
</dbReference>
<dbReference type="PROSITE" id="PS51732">
    <property type="entry name" value="ASN_GLN_ASE_3"/>
    <property type="match status" value="1"/>
</dbReference>
<comment type="function">
    <text evidence="1">Allows the formation of correctly charged Gln-tRNA(Gln) through the transamidation of misacylated Glu-tRNA(Gln) in organisms which lack glutaminyl-tRNA synthetase. The reaction takes place in the presence of glutamine and ATP through an activated gamma-phospho-Glu-tRNA(Gln). The GatDE system is specific for glutamate and does not act on aspartate.</text>
</comment>
<comment type="catalytic activity">
    <reaction evidence="1">
        <text>L-glutamyl-tRNA(Gln) + L-glutamine + ATP + H2O = L-glutaminyl-tRNA(Gln) + L-glutamate + ADP + phosphate + H(+)</text>
        <dbReference type="Rhea" id="RHEA:17521"/>
        <dbReference type="Rhea" id="RHEA-COMP:9681"/>
        <dbReference type="Rhea" id="RHEA-COMP:9684"/>
        <dbReference type="ChEBI" id="CHEBI:15377"/>
        <dbReference type="ChEBI" id="CHEBI:15378"/>
        <dbReference type="ChEBI" id="CHEBI:29985"/>
        <dbReference type="ChEBI" id="CHEBI:30616"/>
        <dbReference type="ChEBI" id="CHEBI:43474"/>
        <dbReference type="ChEBI" id="CHEBI:58359"/>
        <dbReference type="ChEBI" id="CHEBI:78520"/>
        <dbReference type="ChEBI" id="CHEBI:78521"/>
        <dbReference type="ChEBI" id="CHEBI:456216"/>
    </reaction>
</comment>
<comment type="subunit">
    <text evidence="1">Heterodimer of GatD and GatE.</text>
</comment>
<comment type="similarity">
    <text evidence="1">Belongs to the asparaginase 1 family. GatD subfamily.</text>
</comment>
<keyword id="KW-0067">ATP-binding</keyword>
<keyword id="KW-0436">Ligase</keyword>
<keyword id="KW-0547">Nucleotide-binding</keyword>
<keyword id="KW-0648">Protein biosynthesis</keyword>
<protein>
    <recommendedName>
        <fullName evidence="1">Glutamyl-tRNA(Gln) amidotransferase subunit D</fullName>
        <shortName evidence="1">Glu-ADT subunit D</shortName>
        <ecNumber evidence="1">6.3.5.-</ecNumber>
    </recommendedName>
</protein>
<name>GATD_METVS</name>
<organism>
    <name type="scientific">Methanococcus vannielii (strain ATCC 35089 / DSM 1224 / JCM 13029 / OCM 148 / SB)</name>
    <dbReference type="NCBI Taxonomy" id="406327"/>
    <lineage>
        <taxon>Archaea</taxon>
        <taxon>Methanobacteriati</taxon>
        <taxon>Methanobacteriota</taxon>
        <taxon>Methanomada group</taxon>
        <taxon>Methanococci</taxon>
        <taxon>Methanococcales</taxon>
        <taxon>Methanococcaceae</taxon>
        <taxon>Methanococcus</taxon>
    </lineage>
</organism>
<reference key="1">
    <citation type="submission" date="2007-06" db="EMBL/GenBank/DDBJ databases">
        <title>Complete sequence of Methanococcus vannielii SB.</title>
        <authorList>
            <consortium name="US DOE Joint Genome Institute"/>
            <person name="Copeland A."/>
            <person name="Lucas S."/>
            <person name="Lapidus A."/>
            <person name="Barry K."/>
            <person name="Glavina del Rio T."/>
            <person name="Dalin E."/>
            <person name="Tice H."/>
            <person name="Pitluck S."/>
            <person name="Chain P."/>
            <person name="Malfatti S."/>
            <person name="Shin M."/>
            <person name="Vergez L."/>
            <person name="Schmutz J."/>
            <person name="Larimer F."/>
            <person name="Land M."/>
            <person name="Hauser L."/>
            <person name="Kyrpides N."/>
            <person name="Anderson I."/>
            <person name="Sieprawska-Lupa M."/>
            <person name="Whitman W.B."/>
            <person name="Richardson P."/>
        </authorList>
    </citation>
    <scope>NUCLEOTIDE SEQUENCE [LARGE SCALE GENOMIC DNA]</scope>
    <source>
        <strain>ATCC 35089 / DSM 1224 / JCM 13029 / OCM 148 / SB</strain>
    </source>
</reference>
<evidence type="ECO:0000255" key="1">
    <source>
        <dbReference type="HAMAP-Rule" id="MF_00586"/>
    </source>
</evidence>
<evidence type="ECO:0000255" key="2">
    <source>
        <dbReference type="PROSITE-ProRule" id="PRU01068"/>
    </source>
</evidence>
<sequence>MDVGDFVKIKMENTMYCGTLMPSINEDTIVVKMKSGYNVGLKKTKIKSIEILKPENSSNFQPLTSSNNEFKPLNLEKNPNLKNISILSTGGTVASRVDYKTGAVHPAFTANDLIRAVPELLDIANIKGRAILNILSENMLPKYWVMTAEAIKEEIENGAEGIVITHGTDTMHYTAAALSFMVESEVPIILVGAQRSSDRPSSDAALNIISAVMAATEPIKGVYVVMHGEIDDTICNLHEGVKVRKLHSSRRDAFKSVNNTPVAKINPFTKEITYLREIKPQNSSKIKKVSINKKLEEKIALIKVYPGIDSEILKFYVDKGYKAIVLEGTGLGHTPETFFSGIDYANKNNVLVLMSTQTINGRVNMNIYSNGRELQSLGVLPCEDILSEVLFVKIMHLLGNYDLKDAKKLICKNRVGEINESINLKY</sequence>
<gene>
    <name evidence="1" type="primary">gatD</name>
    <name type="ordered locus">Mevan_0579</name>
</gene>
<feature type="chain" id="PRO_1000025461" description="Glutamyl-tRNA(Gln) amidotransferase subunit D">
    <location>
        <begin position="1"/>
        <end position="426"/>
    </location>
</feature>
<feature type="domain" description="Asparaginase/glutaminase" evidence="2">
    <location>
        <begin position="82"/>
        <end position="413"/>
    </location>
</feature>
<feature type="active site" evidence="1">
    <location>
        <position position="92"/>
    </location>
</feature>
<feature type="active site" evidence="1">
    <location>
        <position position="168"/>
    </location>
</feature>
<feature type="active site" evidence="1">
    <location>
        <position position="169"/>
    </location>
</feature>
<feature type="active site" evidence="1">
    <location>
        <position position="245"/>
    </location>
</feature>
<proteinExistence type="inferred from homology"/>